<proteinExistence type="inferred from homology"/>
<reference key="1">
    <citation type="journal article" date="2003" name="Mol. Microbiol.">
        <title>An integrated analysis of the genome of the hyperthermophilic archaeon Pyrococcus abyssi.</title>
        <authorList>
            <person name="Cohen G.N."/>
            <person name="Barbe V."/>
            <person name="Flament D."/>
            <person name="Galperin M."/>
            <person name="Heilig R."/>
            <person name="Lecompte O."/>
            <person name="Poch O."/>
            <person name="Prieur D."/>
            <person name="Querellou J."/>
            <person name="Ripp R."/>
            <person name="Thierry J.-C."/>
            <person name="Van der Oost J."/>
            <person name="Weissenbach J."/>
            <person name="Zivanovic Y."/>
            <person name="Forterre P."/>
        </authorList>
    </citation>
    <scope>NUCLEOTIDE SEQUENCE [LARGE SCALE GENOMIC DNA]</scope>
    <source>
        <strain>GE5 / Orsay</strain>
    </source>
</reference>
<reference key="2">
    <citation type="journal article" date="2012" name="Curr. Microbiol.">
        <title>Re-annotation of two hyperthermophilic archaea Pyrococcus abyssi GE5 and Pyrococcus furiosus DSM 3638.</title>
        <authorList>
            <person name="Gao J."/>
            <person name="Wang J."/>
        </authorList>
    </citation>
    <scope>GENOME REANNOTATION</scope>
    <source>
        <strain>GE5 / Orsay</strain>
    </source>
</reference>
<accession>Q9UYB6</accession>
<accession>G8ZJU4</accession>
<sequence length="276" mass="31351">MLPDRVLEILNEMKAERIRGATWLARKGAEAFLALAEELDEALLEDAIRELRSRIIEVNPSMASLYNLARFMPITNNRELVKMRALEFLRRMDEAKRELASIGAQLIDDGDVIITHSFSSSVLEIFKVAKDRRKSFKVIITESSPDYEGLHLANELENLGIEFEVITDSQMGLFCRKATISMVGADMVTRDGFVVNKAGTYLLALACHESDVPFYVAAETYKFHPTVKSNEVVLHERDFSRSGFRVRNVLFDLTPWKFIRGIITELGIVIPPRDIQ</sequence>
<keyword id="KW-0396">Initiation factor</keyword>
<keyword id="KW-0648">Protein biosynthesis</keyword>
<evidence type="ECO:0000250" key="1"/>
<evidence type="ECO:0000305" key="2"/>
<gene>
    <name type="ordered locus">PYRAB15920</name>
    <name type="ORF">PAB1306</name>
</gene>
<name>EI2BL_PYRAB</name>
<comment type="function">
    <text evidence="1">Catalyzes the exchange of initiation factor 2-bound GDP for GTP.</text>
</comment>
<comment type="subunit">
    <text evidence="2">Complex of two different subunits.</text>
</comment>
<comment type="similarity">
    <text evidence="2">Belongs to the eIF-2B alpha/beta/delta subunits family.</text>
</comment>
<dbReference type="EMBL" id="AJ248288">
    <property type="protein sequence ID" value="CAB50496.1"/>
    <property type="molecule type" value="Genomic_DNA"/>
</dbReference>
<dbReference type="EMBL" id="HE613800">
    <property type="protein sequence ID" value="CCE71051.1"/>
    <property type="molecule type" value="Genomic_DNA"/>
</dbReference>
<dbReference type="PIR" id="B75007">
    <property type="entry name" value="B75007"/>
</dbReference>
<dbReference type="RefSeq" id="WP_010868710.1">
    <property type="nucleotide sequence ID" value="NC_000868.1"/>
</dbReference>
<dbReference type="SMR" id="Q9UYB6"/>
<dbReference type="STRING" id="272844.PAB1306"/>
<dbReference type="KEGG" id="pab:PAB1306"/>
<dbReference type="PATRIC" id="fig|272844.11.peg.1698"/>
<dbReference type="eggNOG" id="arCOG01125">
    <property type="taxonomic scope" value="Archaea"/>
</dbReference>
<dbReference type="HOGENOM" id="CLU_016218_2_1_2"/>
<dbReference type="OrthoDB" id="45195at2157"/>
<dbReference type="PhylomeDB" id="Q9UYB6"/>
<dbReference type="Proteomes" id="UP000000810">
    <property type="component" value="Chromosome"/>
</dbReference>
<dbReference type="Proteomes" id="UP000009139">
    <property type="component" value="Chromosome"/>
</dbReference>
<dbReference type="GO" id="GO:0005085">
    <property type="term" value="F:guanyl-nucleotide exchange factor activity"/>
    <property type="evidence" value="ECO:0007669"/>
    <property type="project" value="TreeGrafter"/>
</dbReference>
<dbReference type="GO" id="GO:0003743">
    <property type="term" value="F:translation initiation factor activity"/>
    <property type="evidence" value="ECO:0007669"/>
    <property type="project" value="UniProtKB-KW"/>
</dbReference>
<dbReference type="Gene3D" id="1.20.120.420">
    <property type="entry name" value="translation initiation factor eif-2b, domain 1"/>
    <property type="match status" value="1"/>
</dbReference>
<dbReference type="Gene3D" id="3.40.50.10470">
    <property type="entry name" value="Translation initiation factor eif-2b, domain 2"/>
    <property type="match status" value="1"/>
</dbReference>
<dbReference type="InterPro" id="IPR051501">
    <property type="entry name" value="eIF2B_alpha/beta/delta"/>
</dbReference>
<dbReference type="InterPro" id="IPR000649">
    <property type="entry name" value="IF-2B-related"/>
</dbReference>
<dbReference type="InterPro" id="IPR042529">
    <property type="entry name" value="IF_2B-like_C"/>
</dbReference>
<dbReference type="InterPro" id="IPR027363">
    <property type="entry name" value="M1Pi_N"/>
</dbReference>
<dbReference type="InterPro" id="IPR037171">
    <property type="entry name" value="NagB/RpiA_transferase-like"/>
</dbReference>
<dbReference type="NCBIfam" id="NF006210">
    <property type="entry name" value="PRK08335.1"/>
    <property type="match status" value="1"/>
</dbReference>
<dbReference type="PANTHER" id="PTHR45860">
    <property type="entry name" value="TRANSLATION INITIATION FACTOR EIF-2B SUBUNIT ALPHA"/>
    <property type="match status" value="1"/>
</dbReference>
<dbReference type="PANTHER" id="PTHR45860:SF1">
    <property type="entry name" value="TRANSLATION INITIATION FACTOR EIF-2B SUBUNIT ALPHA"/>
    <property type="match status" value="1"/>
</dbReference>
<dbReference type="Pfam" id="PF01008">
    <property type="entry name" value="IF-2B"/>
    <property type="match status" value="1"/>
</dbReference>
<dbReference type="SUPFAM" id="SSF100950">
    <property type="entry name" value="NagB/RpiA/CoA transferase-like"/>
    <property type="match status" value="1"/>
</dbReference>
<protein>
    <recommendedName>
        <fullName>Putative translation initiation factor eIF-2B subunit 2-like</fullName>
    </recommendedName>
    <alternativeName>
        <fullName>eIF-2B GDP-GTP exchange factor</fullName>
    </alternativeName>
</protein>
<feature type="chain" id="PRO_0000156107" description="Putative translation initiation factor eIF-2B subunit 2-like">
    <location>
        <begin position="1"/>
        <end position="276"/>
    </location>
</feature>
<organism>
    <name type="scientific">Pyrococcus abyssi (strain GE5 / Orsay)</name>
    <dbReference type="NCBI Taxonomy" id="272844"/>
    <lineage>
        <taxon>Archaea</taxon>
        <taxon>Methanobacteriati</taxon>
        <taxon>Methanobacteriota</taxon>
        <taxon>Thermococci</taxon>
        <taxon>Thermococcales</taxon>
        <taxon>Thermococcaceae</taxon>
        <taxon>Pyrococcus</taxon>
    </lineage>
</organism>